<comment type="function">
    <text evidence="1">Binds to transferrin receptor (TFR) and reduces its affinity for iron-loaded transferrin.</text>
</comment>
<comment type="subunit">
    <text evidence="1">Binds TFR through the extracellular domain in a pH-dependent manner.</text>
</comment>
<comment type="subcellular location">
    <subcellularLocation>
        <location evidence="1">Cell membrane</location>
        <topology evidence="1">Single-pass type I membrane protein</topology>
    </subcellularLocation>
</comment>
<comment type="similarity">
    <text evidence="4">Belongs to the MHC class I family.</text>
</comment>
<organism>
    <name type="scientific">Rattus norvegicus</name>
    <name type="common">Rat</name>
    <dbReference type="NCBI Taxonomy" id="10116"/>
    <lineage>
        <taxon>Eukaryota</taxon>
        <taxon>Metazoa</taxon>
        <taxon>Chordata</taxon>
        <taxon>Craniata</taxon>
        <taxon>Vertebrata</taxon>
        <taxon>Euteleostomi</taxon>
        <taxon>Mammalia</taxon>
        <taxon>Eutheria</taxon>
        <taxon>Euarchontoglires</taxon>
        <taxon>Glires</taxon>
        <taxon>Rodentia</taxon>
        <taxon>Myomorpha</taxon>
        <taxon>Muroidea</taxon>
        <taxon>Muridae</taxon>
        <taxon>Murinae</taxon>
        <taxon>Rattus</taxon>
    </lineage>
</organism>
<sequence>MDRSAGLPVRLLLLLLLLLLWSVAPQALRPGSHSLRYLFMGASKPDLGLPFFEALGYVDDQLFVSYNHESRRAEPRAPWILGQTSSQLWLQLSQSLKGWDYMFIVDFWTIMGNYNHSKVTKLRVVPESHILQVILGCEVHEDNSTSGFWKYGYDGQDHLEFCPKTLNWSAAEPRAWATKMEWEEHRIRARQSRDYLQRDCPQQLKQVLELQRGVLGQQVPTLVKVTRHWASTGTSLRCQALNFFPQNITMRWLKDSQPLDAKDVNPENVLPNGDGTYQGWLTLAVAPGEETRFSCQVEHPGLDQPLTATWEPSRSQDMIIGIISGITICAIFFVGILILVLRKRKVSGGTMGDYVLTECE</sequence>
<gene>
    <name type="primary">Hfe</name>
</gene>
<proteinExistence type="evidence at transcript level"/>
<name>HFE_RAT</name>
<evidence type="ECO:0000250" key="1">
    <source>
        <dbReference type="UniProtKB" id="Q30201"/>
    </source>
</evidence>
<evidence type="ECO:0000255" key="2"/>
<evidence type="ECO:0000255" key="3">
    <source>
        <dbReference type="PROSITE-ProRule" id="PRU00114"/>
    </source>
</evidence>
<evidence type="ECO:0000305" key="4"/>
<accession>O35799</accession>
<accession>O35175</accession>
<keyword id="KW-1003">Cell membrane</keyword>
<keyword id="KW-1015">Disulfide bond</keyword>
<keyword id="KW-0325">Glycoprotein</keyword>
<keyword id="KW-0406">Ion transport</keyword>
<keyword id="KW-0408">Iron</keyword>
<keyword id="KW-0410">Iron transport</keyword>
<keyword id="KW-0472">Membrane</keyword>
<keyword id="KW-1185">Reference proteome</keyword>
<keyword id="KW-0732">Signal</keyword>
<keyword id="KW-0812">Transmembrane</keyword>
<keyword id="KW-1133">Transmembrane helix</keyword>
<keyword id="KW-0813">Transport</keyword>
<reference key="1">
    <citation type="submission" date="1997-09" db="EMBL/GenBank/DDBJ databases">
        <authorList>
            <person name="Banasch M.W."/>
            <person name="Schaefer H."/>
            <person name="Schmidt W.E."/>
        </authorList>
    </citation>
    <scope>NUCLEOTIDE SEQUENCE [MRNA]</scope>
    <source>
        <tissue>Liver</tissue>
    </source>
</reference>
<reference key="2">
    <citation type="submission" date="1997-06" db="EMBL/GenBank/DDBJ databases">
        <authorList>
            <person name="Sawada-Hirai R."/>
            <person name="Rothenberg B.E."/>
        </authorList>
    </citation>
    <scope>NUCLEOTIDE SEQUENCE [MRNA] OF 42-303</scope>
    <source>
        <tissue>Small intestine</tissue>
    </source>
</reference>
<protein>
    <recommendedName>
        <fullName>Hereditary hemochromatosis protein homolog</fullName>
    </recommendedName>
    <alternativeName>
        <fullName>RT1-CAFE</fullName>
    </alternativeName>
</protein>
<feature type="signal peptide" evidence="2">
    <location>
        <begin position="1"/>
        <end position="25"/>
    </location>
</feature>
<feature type="chain" id="PRO_0000018895" description="Hereditary hemochromatosis protein homolog">
    <location>
        <begin position="26"/>
        <end position="360"/>
    </location>
</feature>
<feature type="topological domain" description="Extracellular" evidence="1">
    <location>
        <begin position="26"/>
        <end position="319"/>
    </location>
</feature>
<feature type="transmembrane region" description="Helical" evidence="2">
    <location>
        <begin position="320"/>
        <end position="340"/>
    </location>
</feature>
<feature type="topological domain" description="Cytoplasmic" evidence="1">
    <location>
        <begin position="341"/>
        <end position="360"/>
    </location>
</feature>
<feature type="domain" description="Ig-like C1-type">
    <location>
        <begin position="220"/>
        <end position="309"/>
    </location>
</feature>
<feature type="region of interest" description="Alpha-1">
    <location>
        <begin position="26"/>
        <end position="127"/>
    </location>
</feature>
<feature type="region of interest" description="Alpha-2">
    <location>
        <begin position="128"/>
        <end position="218"/>
    </location>
</feature>
<feature type="region of interest" description="Alpha-3">
    <location>
        <begin position="219"/>
        <end position="310"/>
    </location>
</feature>
<feature type="region of interest" description="Connecting peptide">
    <location>
        <begin position="311"/>
        <end position="319"/>
    </location>
</feature>
<feature type="glycosylation site" description="N-linked (GlcNAc...) asparagine" evidence="2">
    <location>
        <position position="115"/>
    </location>
</feature>
<feature type="glycosylation site" description="N-linked (GlcNAc...) asparagine" evidence="2">
    <location>
        <position position="143"/>
    </location>
</feature>
<feature type="glycosylation site" description="N-linked (GlcNAc...) asparagine" evidence="2">
    <location>
        <position position="167"/>
    </location>
</feature>
<feature type="glycosylation site" description="N-linked (GlcNAc...) asparagine" evidence="2">
    <location>
        <position position="247"/>
    </location>
</feature>
<feature type="disulfide bond" evidence="3">
    <location>
        <begin position="137"/>
        <end position="200"/>
    </location>
</feature>
<feature type="disulfide bond" evidence="3">
    <location>
        <begin position="238"/>
        <end position="295"/>
    </location>
</feature>
<feature type="sequence conflict" description="In Ref. 2; AAB86597." evidence="4" ref="2">
    <original>R</original>
    <variation>K</variation>
    <location>
        <position position="198"/>
    </location>
</feature>
<dbReference type="EMBL" id="AJ001517">
    <property type="protein sequence ID" value="CAA04799.1"/>
    <property type="molecule type" value="mRNA"/>
</dbReference>
<dbReference type="EMBL" id="AF008587">
    <property type="protein sequence ID" value="AAB86597.1"/>
    <property type="molecule type" value="mRNA"/>
</dbReference>
<dbReference type="RefSeq" id="NP_445753.1">
    <property type="nucleotide sequence ID" value="NM_053301.4"/>
</dbReference>
<dbReference type="SMR" id="O35799"/>
<dbReference type="FunCoup" id="O35799">
    <property type="interactions" value="211"/>
</dbReference>
<dbReference type="STRING" id="10116.ENSRNOP00000022881"/>
<dbReference type="GlyCosmos" id="O35799">
    <property type="glycosylation" value="4 sites, No reported glycans"/>
</dbReference>
<dbReference type="GlyGen" id="O35799">
    <property type="glycosylation" value="4 sites"/>
</dbReference>
<dbReference type="PhosphoSitePlus" id="O35799"/>
<dbReference type="PaxDb" id="10116-ENSRNOP00000022881"/>
<dbReference type="Ensembl" id="ENSRNOT00000022809.7">
    <property type="protein sequence ID" value="ENSRNOP00000022809.4"/>
    <property type="gene ID" value="ENSRNOG00000016967.8"/>
</dbReference>
<dbReference type="GeneID" id="29199"/>
<dbReference type="KEGG" id="rno:29199"/>
<dbReference type="UCSC" id="RGD:2793">
    <property type="organism name" value="rat"/>
</dbReference>
<dbReference type="AGR" id="RGD:2793"/>
<dbReference type="CTD" id="3077"/>
<dbReference type="RGD" id="2793">
    <property type="gene designation" value="Hfe"/>
</dbReference>
<dbReference type="eggNOG" id="KOG1745">
    <property type="taxonomic scope" value="Eukaryota"/>
</dbReference>
<dbReference type="GeneTree" id="ENSGT01130000278293"/>
<dbReference type="HOGENOM" id="CLU_047501_0_2_1"/>
<dbReference type="InParanoid" id="O35799"/>
<dbReference type="OMA" id="KGWEHMF"/>
<dbReference type="OrthoDB" id="10043043at2759"/>
<dbReference type="PhylomeDB" id="O35799"/>
<dbReference type="TreeFam" id="TF336617"/>
<dbReference type="Reactome" id="R-RNO-917977">
    <property type="pathway name" value="Transferrin endocytosis and recycling"/>
</dbReference>
<dbReference type="PRO" id="PR:O35799"/>
<dbReference type="Proteomes" id="UP000002494">
    <property type="component" value="Chromosome 17"/>
</dbReference>
<dbReference type="Bgee" id="ENSRNOG00000016967">
    <property type="expression patterns" value="Expressed in liver and 20 other cell types or tissues"/>
</dbReference>
<dbReference type="ExpressionAtlas" id="O35799">
    <property type="expression patterns" value="baseline and differential"/>
</dbReference>
<dbReference type="GO" id="GO:0045177">
    <property type="term" value="C:apical part of cell"/>
    <property type="evidence" value="ECO:0000314"/>
    <property type="project" value="RGD"/>
</dbReference>
<dbReference type="GO" id="GO:0045178">
    <property type="term" value="C:basal part of cell"/>
    <property type="evidence" value="ECO:0000266"/>
    <property type="project" value="RGD"/>
</dbReference>
<dbReference type="GO" id="GO:0031410">
    <property type="term" value="C:cytoplasmic vesicle"/>
    <property type="evidence" value="ECO:0000266"/>
    <property type="project" value="RGD"/>
</dbReference>
<dbReference type="GO" id="GO:0005769">
    <property type="term" value="C:early endosome"/>
    <property type="evidence" value="ECO:0000266"/>
    <property type="project" value="RGD"/>
</dbReference>
<dbReference type="GO" id="GO:0009897">
    <property type="term" value="C:external side of plasma membrane"/>
    <property type="evidence" value="ECO:0000266"/>
    <property type="project" value="RGD"/>
</dbReference>
<dbReference type="GO" id="GO:0005615">
    <property type="term" value="C:extracellular space"/>
    <property type="evidence" value="ECO:0000266"/>
    <property type="project" value="RGD"/>
</dbReference>
<dbReference type="GO" id="GO:1990712">
    <property type="term" value="C:HFE-transferrin receptor complex"/>
    <property type="evidence" value="ECO:0000266"/>
    <property type="project" value="RGD"/>
</dbReference>
<dbReference type="GO" id="GO:0048471">
    <property type="term" value="C:perinuclear region of cytoplasm"/>
    <property type="evidence" value="ECO:0000266"/>
    <property type="project" value="RGD"/>
</dbReference>
<dbReference type="GO" id="GO:0055037">
    <property type="term" value="C:recycling endosome"/>
    <property type="evidence" value="ECO:0000266"/>
    <property type="project" value="RGD"/>
</dbReference>
<dbReference type="GO" id="GO:1990357">
    <property type="term" value="C:terminal web"/>
    <property type="evidence" value="ECO:0000314"/>
    <property type="project" value="RGD"/>
</dbReference>
<dbReference type="GO" id="GO:0030881">
    <property type="term" value="F:beta-2-microglobulin binding"/>
    <property type="evidence" value="ECO:0000266"/>
    <property type="project" value="RGD"/>
</dbReference>
<dbReference type="GO" id="GO:0039706">
    <property type="term" value="F:co-receptor binding"/>
    <property type="evidence" value="ECO:0000266"/>
    <property type="project" value="RGD"/>
</dbReference>
<dbReference type="GO" id="GO:0005102">
    <property type="term" value="F:signaling receptor binding"/>
    <property type="evidence" value="ECO:0000266"/>
    <property type="project" value="RGD"/>
</dbReference>
<dbReference type="GO" id="GO:1990459">
    <property type="term" value="F:transferrin receptor binding"/>
    <property type="evidence" value="ECO:0000266"/>
    <property type="project" value="RGD"/>
</dbReference>
<dbReference type="GO" id="GO:0006953">
    <property type="term" value="P:acute-phase response"/>
    <property type="evidence" value="ECO:0000270"/>
    <property type="project" value="RGD"/>
</dbReference>
<dbReference type="GO" id="GO:0030509">
    <property type="term" value="P:BMP signaling pathway"/>
    <property type="evidence" value="ECO:0000266"/>
    <property type="project" value="RGD"/>
</dbReference>
<dbReference type="GO" id="GO:0071281">
    <property type="term" value="P:cellular response to iron ion"/>
    <property type="evidence" value="ECO:0000266"/>
    <property type="project" value="RGD"/>
</dbReference>
<dbReference type="GO" id="GO:0010106">
    <property type="term" value="P:cellular response to iron ion starvation"/>
    <property type="evidence" value="ECO:0000270"/>
    <property type="project" value="RGD"/>
</dbReference>
<dbReference type="GO" id="GO:0007565">
    <property type="term" value="P:female pregnancy"/>
    <property type="evidence" value="ECO:0000270"/>
    <property type="project" value="RGD"/>
</dbReference>
<dbReference type="GO" id="GO:0042446">
    <property type="term" value="P:hormone biosynthetic process"/>
    <property type="evidence" value="ECO:0000266"/>
    <property type="project" value="RGD"/>
</dbReference>
<dbReference type="GO" id="GO:0006879">
    <property type="term" value="P:intracellular iron ion homeostasis"/>
    <property type="evidence" value="ECO:0000266"/>
    <property type="project" value="RGD"/>
</dbReference>
<dbReference type="GO" id="GO:0006826">
    <property type="term" value="P:iron ion transport"/>
    <property type="evidence" value="ECO:0007669"/>
    <property type="project" value="UniProtKB-KW"/>
</dbReference>
<dbReference type="GO" id="GO:0097421">
    <property type="term" value="P:liver regeneration"/>
    <property type="evidence" value="ECO:0000270"/>
    <property type="project" value="RGD"/>
</dbReference>
<dbReference type="GO" id="GO:0060586">
    <property type="term" value="P:multicellular organismal-level iron ion homeostasis"/>
    <property type="evidence" value="ECO:0000270"/>
    <property type="project" value="RGD"/>
</dbReference>
<dbReference type="GO" id="GO:1904283">
    <property type="term" value="P:negative regulation of antigen processing and presentation of endogenous peptide antigen via MHC class I"/>
    <property type="evidence" value="ECO:0000266"/>
    <property type="project" value="RGD"/>
</dbReference>
<dbReference type="GO" id="GO:2001186">
    <property type="term" value="P:negative regulation of CD8-positive, alpha-beta T cell activation"/>
    <property type="evidence" value="ECO:0000266"/>
    <property type="project" value="RGD"/>
</dbReference>
<dbReference type="GO" id="GO:0032435">
    <property type="term" value="P:negative regulation of proteasomal ubiquitin-dependent protein catabolic process"/>
    <property type="evidence" value="ECO:0000266"/>
    <property type="project" value="RGD"/>
</dbReference>
<dbReference type="GO" id="GO:0002725">
    <property type="term" value="P:negative regulation of T cell cytokine production"/>
    <property type="evidence" value="ECO:0000266"/>
    <property type="project" value="RGD"/>
</dbReference>
<dbReference type="GO" id="GO:2000059">
    <property type="term" value="P:negative regulation of ubiquitin-dependent protein catabolic process"/>
    <property type="evidence" value="ECO:0000266"/>
    <property type="project" value="RGD"/>
</dbReference>
<dbReference type="GO" id="GO:0010628">
    <property type="term" value="P:positive regulation of gene expression"/>
    <property type="evidence" value="ECO:0000266"/>
    <property type="project" value="RGD"/>
</dbReference>
<dbReference type="GO" id="GO:0090277">
    <property type="term" value="P:positive regulation of peptide hormone secretion"/>
    <property type="evidence" value="ECO:0000266"/>
    <property type="project" value="RGD"/>
</dbReference>
<dbReference type="GO" id="GO:0048260">
    <property type="term" value="P:positive regulation of receptor-mediated endocytosis"/>
    <property type="evidence" value="ECO:0000266"/>
    <property type="project" value="RGD"/>
</dbReference>
<dbReference type="GO" id="GO:0060391">
    <property type="term" value="P:positive regulation of SMAD protein signal transduction"/>
    <property type="evidence" value="ECO:0000266"/>
    <property type="project" value="RGD"/>
</dbReference>
<dbReference type="GO" id="GO:0034756">
    <property type="term" value="P:regulation of iron ion transport"/>
    <property type="evidence" value="ECO:0000266"/>
    <property type="project" value="RGD"/>
</dbReference>
<dbReference type="GO" id="GO:2000008">
    <property type="term" value="P:regulation of protein localization to cell surface"/>
    <property type="evidence" value="ECO:0000266"/>
    <property type="project" value="RGD"/>
</dbReference>
<dbReference type="GO" id="GO:0010039">
    <property type="term" value="P:response to iron ion"/>
    <property type="evidence" value="ECO:0000266"/>
    <property type="project" value="RGD"/>
</dbReference>
<dbReference type="GO" id="GO:1990641">
    <property type="term" value="P:response to iron ion starvation"/>
    <property type="evidence" value="ECO:0000270"/>
    <property type="project" value="RGD"/>
</dbReference>
<dbReference type="FunFam" id="3.30.500.10:FF:000001">
    <property type="entry name" value="H-2 class I histocompatibility antigen, alpha chain"/>
    <property type="match status" value="1"/>
</dbReference>
<dbReference type="FunFam" id="2.60.40.10:FF:000204">
    <property type="entry name" value="Major histocompatibility complex, class I-related protein"/>
    <property type="match status" value="1"/>
</dbReference>
<dbReference type="Gene3D" id="2.60.40.10">
    <property type="entry name" value="Immunoglobulins"/>
    <property type="match status" value="1"/>
</dbReference>
<dbReference type="Gene3D" id="3.30.500.10">
    <property type="entry name" value="MHC class I-like antigen recognition-like"/>
    <property type="match status" value="1"/>
</dbReference>
<dbReference type="InterPro" id="IPR007110">
    <property type="entry name" value="Ig-like_dom"/>
</dbReference>
<dbReference type="InterPro" id="IPR036179">
    <property type="entry name" value="Ig-like_dom_sf"/>
</dbReference>
<dbReference type="InterPro" id="IPR013783">
    <property type="entry name" value="Ig-like_fold"/>
</dbReference>
<dbReference type="InterPro" id="IPR003006">
    <property type="entry name" value="Ig/MHC_CS"/>
</dbReference>
<dbReference type="InterPro" id="IPR003597">
    <property type="entry name" value="Ig_C1-set"/>
</dbReference>
<dbReference type="InterPro" id="IPR050208">
    <property type="entry name" value="MHC_class-I_related"/>
</dbReference>
<dbReference type="InterPro" id="IPR011161">
    <property type="entry name" value="MHC_I-like_Ag-recog"/>
</dbReference>
<dbReference type="InterPro" id="IPR037055">
    <property type="entry name" value="MHC_I-like_Ag-recog_sf"/>
</dbReference>
<dbReference type="InterPro" id="IPR011162">
    <property type="entry name" value="MHC_I/II-like_Ag-recog"/>
</dbReference>
<dbReference type="InterPro" id="IPR001039">
    <property type="entry name" value="MHC_I_a_a1/a2"/>
</dbReference>
<dbReference type="PANTHER" id="PTHR16675:SF172">
    <property type="entry name" value="HEREDITARY HEMOCHROMATOSIS PROTEIN"/>
    <property type="match status" value="1"/>
</dbReference>
<dbReference type="PANTHER" id="PTHR16675">
    <property type="entry name" value="MHC CLASS I-RELATED"/>
    <property type="match status" value="1"/>
</dbReference>
<dbReference type="Pfam" id="PF07654">
    <property type="entry name" value="C1-set"/>
    <property type="match status" value="1"/>
</dbReference>
<dbReference type="Pfam" id="PF00129">
    <property type="entry name" value="MHC_I"/>
    <property type="match status" value="1"/>
</dbReference>
<dbReference type="PRINTS" id="PR01638">
    <property type="entry name" value="MHCCLASSI"/>
</dbReference>
<dbReference type="SMART" id="SM00407">
    <property type="entry name" value="IGc1"/>
    <property type="match status" value="1"/>
</dbReference>
<dbReference type="SUPFAM" id="SSF48726">
    <property type="entry name" value="Immunoglobulin"/>
    <property type="match status" value="1"/>
</dbReference>
<dbReference type="SUPFAM" id="SSF54452">
    <property type="entry name" value="MHC antigen-recognition domain"/>
    <property type="match status" value="1"/>
</dbReference>
<dbReference type="PROSITE" id="PS50835">
    <property type="entry name" value="IG_LIKE"/>
    <property type="match status" value="1"/>
</dbReference>
<dbReference type="PROSITE" id="PS00290">
    <property type="entry name" value="IG_MHC"/>
    <property type="match status" value="1"/>
</dbReference>